<evidence type="ECO:0000255" key="1">
    <source>
        <dbReference type="HAMAP-Rule" id="MF_01174"/>
    </source>
</evidence>
<accession>Q48G19</accession>
<comment type="function">
    <text evidence="1">Catalyzes the NAD-dependent reduction of succinylglutamate semialdehyde into succinylglutamate.</text>
</comment>
<comment type="catalytic activity">
    <reaction evidence="1">
        <text>N-succinyl-L-glutamate 5-semialdehyde + NAD(+) + H2O = N-succinyl-L-glutamate + NADH + 2 H(+)</text>
        <dbReference type="Rhea" id="RHEA:10812"/>
        <dbReference type="ChEBI" id="CHEBI:15377"/>
        <dbReference type="ChEBI" id="CHEBI:15378"/>
        <dbReference type="ChEBI" id="CHEBI:57540"/>
        <dbReference type="ChEBI" id="CHEBI:57945"/>
        <dbReference type="ChEBI" id="CHEBI:58520"/>
        <dbReference type="ChEBI" id="CHEBI:58763"/>
        <dbReference type="EC" id="1.2.1.71"/>
    </reaction>
</comment>
<comment type="pathway">
    <text evidence="1">Amino-acid degradation; L-arginine degradation via AST pathway; L-glutamate and succinate from L-arginine: step 4/5.</text>
</comment>
<comment type="similarity">
    <text evidence="1">Belongs to the aldehyde dehydrogenase family. AstD subfamily.</text>
</comment>
<keyword id="KW-0056">Arginine metabolism</keyword>
<keyword id="KW-0520">NAD</keyword>
<keyword id="KW-0560">Oxidoreductase</keyword>
<gene>
    <name evidence="1" type="primary">astD</name>
    <name type="ordered locus">PSPPH_3518</name>
</gene>
<dbReference type="EC" id="1.2.1.71" evidence="1"/>
<dbReference type="EMBL" id="CP000058">
    <property type="protein sequence ID" value="AAZ37796.1"/>
    <property type="molecule type" value="Genomic_DNA"/>
</dbReference>
<dbReference type="SMR" id="Q48G19"/>
<dbReference type="KEGG" id="psp:PSPPH_3518"/>
<dbReference type="eggNOG" id="COG1012">
    <property type="taxonomic scope" value="Bacteria"/>
</dbReference>
<dbReference type="HOGENOM" id="CLU_005391_1_0_6"/>
<dbReference type="UniPathway" id="UPA00185">
    <property type="reaction ID" value="UER00282"/>
</dbReference>
<dbReference type="Proteomes" id="UP000000551">
    <property type="component" value="Chromosome"/>
</dbReference>
<dbReference type="GO" id="GO:0043824">
    <property type="term" value="F:succinylglutamate-semialdehyde dehydrogenase activity"/>
    <property type="evidence" value="ECO:0007669"/>
    <property type="project" value="UniProtKB-EC"/>
</dbReference>
<dbReference type="GO" id="GO:0019544">
    <property type="term" value="P:arginine catabolic process to glutamate"/>
    <property type="evidence" value="ECO:0007669"/>
    <property type="project" value="UniProtKB-UniRule"/>
</dbReference>
<dbReference type="GO" id="GO:0019545">
    <property type="term" value="P:arginine catabolic process to succinate"/>
    <property type="evidence" value="ECO:0007669"/>
    <property type="project" value="UniProtKB-UniRule"/>
</dbReference>
<dbReference type="CDD" id="cd07095">
    <property type="entry name" value="ALDH_SGSD_AstD"/>
    <property type="match status" value="1"/>
</dbReference>
<dbReference type="FunFam" id="3.40.309.10:FF:000013">
    <property type="entry name" value="N-succinylglutamate 5-semialdehyde dehydrogenase"/>
    <property type="match status" value="1"/>
</dbReference>
<dbReference type="FunFam" id="3.40.605.10:FF:000010">
    <property type="entry name" value="N-succinylglutamate 5-semialdehyde dehydrogenase"/>
    <property type="match status" value="1"/>
</dbReference>
<dbReference type="Gene3D" id="3.40.605.10">
    <property type="entry name" value="Aldehyde Dehydrogenase, Chain A, domain 1"/>
    <property type="match status" value="1"/>
</dbReference>
<dbReference type="Gene3D" id="3.40.309.10">
    <property type="entry name" value="Aldehyde Dehydrogenase, Chain A, domain 2"/>
    <property type="match status" value="1"/>
</dbReference>
<dbReference type="HAMAP" id="MF_01174">
    <property type="entry name" value="Aldedh_AstD"/>
    <property type="match status" value="1"/>
</dbReference>
<dbReference type="InterPro" id="IPR016161">
    <property type="entry name" value="Ald_DH/histidinol_DH"/>
</dbReference>
<dbReference type="InterPro" id="IPR016163">
    <property type="entry name" value="Ald_DH_C"/>
</dbReference>
<dbReference type="InterPro" id="IPR016160">
    <property type="entry name" value="Ald_DH_CS_CYS"/>
</dbReference>
<dbReference type="InterPro" id="IPR029510">
    <property type="entry name" value="Ald_DH_CS_GLU"/>
</dbReference>
<dbReference type="InterPro" id="IPR016162">
    <property type="entry name" value="Ald_DH_N"/>
</dbReference>
<dbReference type="InterPro" id="IPR015590">
    <property type="entry name" value="Aldehyde_DH_dom"/>
</dbReference>
<dbReference type="InterPro" id="IPR017649">
    <property type="entry name" value="SuccinylGlu_semiald_DH_AstD"/>
</dbReference>
<dbReference type="NCBIfam" id="TIGR03240">
    <property type="entry name" value="arg_catab_astD"/>
    <property type="match status" value="1"/>
</dbReference>
<dbReference type="NCBIfam" id="NF006992">
    <property type="entry name" value="PRK09457.1"/>
    <property type="match status" value="1"/>
</dbReference>
<dbReference type="PANTHER" id="PTHR11699">
    <property type="entry name" value="ALDEHYDE DEHYDROGENASE-RELATED"/>
    <property type="match status" value="1"/>
</dbReference>
<dbReference type="Pfam" id="PF00171">
    <property type="entry name" value="Aldedh"/>
    <property type="match status" value="1"/>
</dbReference>
<dbReference type="SUPFAM" id="SSF53720">
    <property type="entry name" value="ALDH-like"/>
    <property type="match status" value="1"/>
</dbReference>
<dbReference type="PROSITE" id="PS00070">
    <property type="entry name" value="ALDEHYDE_DEHYDR_CYS"/>
    <property type="match status" value="1"/>
</dbReference>
<dbReference type="PROSITE" id="PS00687">
    <property type="entry name" value="ALDEHYDE_DEHYDR_GLU"/>
    <property type="match status" value="1"/>
</dbReference>
<reference key="1">
    <citation type="journal article" date="2005" name="J. Bacteriol.">
        <title>Whole-genome sequence analysis of Pseudomonas syringae pv. phaseolicola 1448A reveals divergence among pathovars in genes involved in virulence and transposition.</title>
        <authorList>
            <person name="Joardar V."/>
            <person name="Lindeberg M."/>
            <person name="Jackson R.W."/>
            <person name="Selengut J."/>
            <person name="Dodson R."/>
            <person name="Brinkac L.M."/>
            <person name="Daugherty S.C."/>
            <person name="DeBoy R.T."/>
            <person name="Durkin A.S."/>
            <person name="Gwinn Giglio M."/>
            <person name="Madupu R."/>
            <person name="Nelson W.C."/>
            <person name="Rosovitz M.J."/>
            <person name="Sullivan S.A."/>
            <person name="Crabtree J."/>
            <person name="Creasy T."/>
            <person name="Davidsen T.M."/>
            <person name="Haft D.H."/>
            <person name="Zafar N."/>
            <person name="Zhou L."/>
            <person name="Halpin R."/>
            <person name="Holley T."/>
            <person name="Khouri H.M."/>
            <person name="Feldblyum T.V."/>
            <person name="White O."/>
            <person name="Fraser C.M."/>
            <person name="Chatterjee A.K."/>
            <person name="Cartinhour S."/>
            <person name="Schneider D."/>
            <person name="Mansfield J.W."/>
            <person name="Collmer A."/>
            <person name="Buell R."/>
        </authorList>
    </citation>
    <scope>NUCLEOTIDE SEQUENCE [LARGE SCALE GENOMIC DNA]</scope>
    <source>
        <strain>1448A / Race 6</strain>
    </source>
</reference>
<protein>
    <recommendedName>
        <fullName evidence="1">N-succinylglutamate 5-semialdehyde dehydrogenase</fullName>
        <ecNumber evidence="1">1.2.1.71</ecNumber>
    </recommendedName>
    <alternativeName>
        <fullName evidence="1">Succinylglutamic semialdehyde dehydrogenase</fullName>
        <shortName evidence="1">SGSD</shortName>
    </alternativeName>
</protein>
<proteinExistence type="inferred from homology"/>
<sequence>MSTLYIAGAWQAGQGELFHSLNPVSQQTLWSGQAATPEQVDYAVQAARQAFPGWAQRSLDQRIAVLEAFAASLKGRADELAHCIGEETGKPLWESATEVTSMVNKIAISVQSYRERTGEKSGPLGDATAVLRHKPHGVVAVFGPYNFPGHLPNGHIVPALLAGNTVVFKPSELTPKVAELTVKCWIEAGLPAGVLNLLQGGRETGIALAANPGIDGLFFTGSSRTGDALHQQFAGRPDKILALEMGGNNPLIVDQVQDIEAAVYNIIQSAFISAGQRCTCARRLLVPEGDWGDALLARLVAVSATIEVGAFDQQPSPFMGSVISLEAAHALLDAQRNLLANGAVTLLEMRQPQAGAALLTPGIINVSAVAERPDEELFGPLLQVIRYAGFDAAIAEANATRYGLAAGLLSDSEARYQQFWLHSRAGIVNWNKQLTGAASSAPFGGVGASGNHRASAYYAADYCAYPVASLEAGSLTLPSTLTPGIRLS</sequence>
<name>ASTD_PSE14</name>
<feature type="chain" id="PRO_0000262417" description="N-succinylglutamate 5-semialdehyde dehydrogenase">
    <location>
        <begin position="1"/>
        <end position="488"/>
    </location>
</feature>
<feature type="active site" evidence="1">
    <location>
        <position position="244"/>
    </location>
</feature>
<feature type="active site" evidence="1">
    <location>
        <position position="278"/>
    </location>
</feature>
<feature type="binding site" evidence="1">
    <location>
        <begin position="221"/>
        <end position="226"/>
    </location>
    <ligand>
        <name>NAD(+)</name>
        <dbReference type="ChEBI" id="CHEBI:57540"/>
    </ligand>
</feature>
<organism>
    <name type="scientific">Pseudomonas savastanoi pv. phaseolicola (strain 1448A / Race 6)</name>
    <name type="common">Pseudomonas syringae pv. phaseolicola (strain 1448A / Race 6)</name>
    <dbReference type="NCBI Taxonomy" id="264730"/>
    <lineage>
        <taxon>Bacteria</taxon>
        <taxon>Pseudomonadati</taxon>
        <taxon>Pseudomonadota</taxon>
        <taxon>Gammaproteobacteria</taxon>
        <taxon>Pseudomonadales</taxon>
        <taxon>Pseudomonadaceae</taxon>
        <taxon>Pseudomonas</taxon>
    </lineage>
</organism>